<accession>B2JF32</accession>
<proteinExistence type="inferred from homology"/>
<dbReference type="EMBL" id="CP001043">
    <property type="protein sequence ID" value="ACC69961.1"/>
    <property type="molecule type" value="Genomic_DNA"/>
</dbReference>
<dbReference type="RefSeq" id="WP_012400181.1">
    <property type="nucleotide sequence ID" value="NZ_CADFGH010000007.1"/>
</dbReference>
<dbReference type="SMR" id="B2JF32"/>
<dbReference type="STRING" id="391038.Bphy_0772"/>
<dbReference type="KEGG" id="bph:Bphy_0772"/>
<dbReference type="eggNOG" id="COG0335">
    <property type="taxonomic scope" value="Bacteria"/>
</dbReference>
<dbReference type="HOGENOM" id="CLU_103507_1_0_4"/>
<dbReference type="OrthoDB" id="9803541at2"/>
<dbReference type="Proteomes" id="UP000001192">
    <property type="component" value="Chromosome 1"/>
</dbReference>
<dbReference type="GO" id="GO:0022625">
    <property type="term" value="C:cytosolic large ribosomal subunit"/>
    <property type="evidence" value="ECO:0007669"/>
    <property type="project" value="TreeGrafter"/>
</dbReference>
<dbReference type="GO" id="GO:0003735">
    <property type="term" value="F:structural constituent of ribosome"/>
    <property type="evidence" value="ECO:0007669"/>
    <property type="project" value="InterPro"/>
</dbReference>
<dbReference type="GO" id="GO:0006412">
    <property type="term" value="P:translation"/>
    <property type="evidence" value="ECO:0007669"/>
    <property type="project" value="UniProtKB-UniRule"/>
</dbReference>
<dbReference type="FunFam" id="2.30.30.790:FF:000001">
    <property type="entry name" value="50S ribosomal protein L19"/>
    <property type="match status" value="1"/>
</dbReference>
<dbReference type="Gene3D" id="2.30.30.790">
    <property type="match status" value="1"/>
</dbReference>
<dbReference type="HAMAP" id="MF_00402">
    <property type="entry name" value="Ribosomal_bL19"/>
    <property type="match status" value="1"/>
</dbReference>
<dbReference type="InterPro" id="IPR001857">
    <property type="entry name" value="Ribosomal_bL19"/>
</dbReference>
<dbReference type="InterPro" id="IPR018257">
    <property type="entry name" value="Ribosomal_bL19_CS"/>
</dbReference>
<dbReference type="InterPro" id="IPR038657">
    <property type="entry name" value="Ribosomal_bL19_sf"/>
</dbReference>
<dbReference type="InterPro" id="IPR008991">
    <property type="entry name" value="Translation_prot_SH3-like_sf"/>
</dbReference>
<dbReference type="NCBIfam" id="TIGR01024">
    <property type="entry name" value="rplS_bact"/>
    <property type="match status" value="1"/>
</dbReference>
<dbReference type="PANTHER" id="PTHR15680:SF9">
    <property type="entry name" value="LARGE RIBOSOMAL SUBUNIT PROTEIN BL19M"/>
    <property type="match status" value="1"/>
</dbReference>
<dbReference type="PANTHER" id="PTHR15680">
    <property type="entry name" value="RIBOSOMAL PROTEIN L19"/>
    <property type="match status" value="1"/>
</dbReference>
<dbReference type="Pfam" id="PF01245">
    <property type="entry name" value="Ribosomal_L19"/>
    <property type="match status" value="1"/>
</dbReference>
<dbReference type="PIRSF" id="PIRSF002191">
    <property type="entry name" value="Ribosomal_L19"/>
    <property type="match status" value="1"/>
</dbReference>
<dbReference type="PRINTS" id="PR00061">
    <property type="entry name" value="RIBOSOMALL19"/>
</dbReference>
<dbReference type="SUPFAM" id="SSF50104">
    <property type="entry name" value="Translation proteins SH3-like domain"/>
    <property type="match status" value="1"/>
</dbReference>
<dbReference type="PROSITE" id="PS01015">
    <property type="entry name" value="RIBOSOMAL_L19"/>
    <property type="match status" value="1"/>
</dbReference>
<keyword id="KW-1185">Reference proteome</keyword>
<keyword id="KW-0687">Ribonucleoprotein</keyword>
<keyword id="KW-0689">Ribosomal protein</keyword>
<evidence type="ECO:0000255" key="1">
    <source>
        <dbReference type="HAMAP-Rule" id="MF_00402"/>
    </source>
</evidence>
<evidence type="ECO:0000305" key="2"/>
<name>RL19_PARP8</name>
<reference key="1">
    <citation type="journal article" date="2014" name="Stand. Genomic Sci.">
        <title>Complete genome sequence of Burkholderia phymatum STM815(T), a broad host range and efficient nitrogen-fixing symbiont of Mimosa species.</title>
        <authorList>
            <person name="Moulin L."/>
            <person name="Klonowska A."/>
            <person name="Caroline B."/>
            <person name="Booth K."/>
            <person name="Vriezen J.A."/>
            <person name="Melkonian R."/>
            <person name="James E.K."/>
            <person name="Young J.P."/>
            <person name="Bena G."/>
            <person name="Hauser L."/>
            <person name="Land M."/>
            <person name="Kyrpides N."/>
            <person name="Bruce D."/>
            <person name="Chain P."/>
            <person name="Copeland A."/>
            <person name="Pitluck S."/>
            <person name="Woyke T."/>
            <person name="Lizotte-Waniewski M."/>
            <person name="Bristow J."/>
            <person name="Riley M."/>
        </authorList>
    </citation>
    <scope>NUCLEOTIDE SEQUENCE [LARGE SCALE GENOMIC DNA]</scope>
    <source>
        <strain>DSM 17167 / CIP 108236 / LMG 21445 / STM815</strain>
    </source>
</reference>
<organism>
    <name type="scientific">Paraburkholderia phymatum (strain DSM 17167 / CIP 108236 / LMG 21445 / STM815)</name>
    <name type="common">Burkholderia phymatum</name>
    <dbReference type="NCBI Taxonomy" id="391038"/>
    <lineage>
        <taxon>Bacteria</taxon>
        <taxon>Pseudomonadati</taxon>
        <taxon>Pseudomonadota</taxon>
        <taxon>Betaproteobacteria</taxon>
        <taxon>Burkholderiales</taxon>
        <taxon>Burkholderiaceae</taxon>
        <taxon>Paraburkholderia</taxon>
    </lineage>
</organism>
<feature type="chain" id="PRO_1000193802" description="Large ribosomal subunit protein bL19">
    <location>
        <begin position="1"/>
        <end position="127"/>
    </location>
</feature>
<comment type="function">
    <text evidence="1">This protein is located at the 30S-50S ribosomal subunit interface and may play a role in the structure and function of the aminoacyl-tRNA binding site.</text>
</comment>
<comment type="similarity">
    <text evidence="1">Belongs to the bacterial ribosomal protein bL19 family.</text>
</comment>
<sequence length="127" mass="14202">MNLIAKLEQEEIERALAGKTIPEFAPGDTVIVSVNVVEGNRKRVQAYEGVVIAKRNRGLNSSFIVRKISSGEGVERTFQTYSPLLASIVVKRRGDVRRAKLYYLRERSGKSARIKEKLVSKDRAAQA</sequence>
<gene>
    <name evidence="1" type="primary">rplS</name>
    <name type="ordered locus">Bphy_0772</name>
</gene>
<protein>
    <recommendedName>
        <fullName evidence="1">Large ribosomal subunit protein bL19</fullName>
    </recommendedName>
    <alternativeName>
        <fullName evidence="2">50S ribosomal protein L19</fullName>
    </alternativeName>
</protein>